<reference key="1">
    <citation type="journal article" date="2001" name="Nature">
        <title>Genome sequence of enterohaemorrhagic Escherichia coli O157:H7.</title>
        <authorList>
            <person name="Perna N.T."/>
            <person name="Plunkett G. III"/>
            <person name="Burland V."/>
            <person name="Mau B."/>
            <person name="Glasner J.D."/>
            <person name="Rose D.J."/>
            <person name="Mayhew G.F."/>
            <person name="Evans P.S."/>
            <person name="Gregor J."/>
            <person name="Kirkpatrick H.A."/>
            <person name="Posfai G."/>
            <person name="Hackett J."/>
            <person name="Klink S."/>
            <person name="Boutin A."/>
            <person name="Shao Y."/>
            <person name="Miller L."/>
            <person name="Grotbeck E.J."/>
            <person name="Davis N.W."/>
            <person name="Lim A."/>
            <person name="Dimalanta E.T."/>
            <person name="Potamousis K."/>
            <person name="Apodaca J."/>
            <person name="Anantharaman T.S."/>
            <person name="Lin J."/>
            <person name="Yen G."/>
            <person name="Schwartz D.C."/>
            <person name="Welch R.A."/>
            <person name="Blattner F.R."/>
        </authorList>
    </citation>
    <scope>NUCLEOTIDE SEQUENCE [LARGE SCALE GENOMIC DNA]</scope>
    <source>
        <strain>O157:H7 / EDL933 / ATCC 700927 / EHEC</strain>
    </source>
</reference>
<reference key="2">
    <citation type="journal article" date="2001" name="DNA Res.">
        <title>Complete genome sequence of enterohemorrhagic Escherichia coli O157:H7 and genomic comparison with a laboratory strain K-12.</title>
        <authorList>
            <person name="Hayashi T."/>
            <person name="Makino K."/>
            <person name="Ohnishi M."/>
            <person name="Kurokawa K."/>
            <person name="Ishii K."/>
            <person name="Yokoyama K."/>
            <person name="Han C.-G."/>
            <person name="Ohtsubo E."/>
            <person name="Nakayama K."/>
            <person name="Murata T."/>
            <person name="Tanaka M."/>
            <person name="Tobe T."/>
            <person name="Iida T."/>
            <person name="Takami H."/>
            <person name="Honda T."/>
            <person name="Sasakawa C."/>
            <person name="Ogasawara N."/>
            <person name="Yasunaga T."/>
            <person name="Kuhara S."/>
            <person name="Shiba T."/>
            <person name="Hattori M."/>
            <person name="Shinagawa H."/>
        </authorList>
    </citation>
    <scope>NUCLEOTIDE SEQUENCE [LARGE SCALE GENOMIC DNA]</scope>
    <source>
        <strain>O157:H7 / Sakai / RIMD 0509952 / EHEC</strain>
    </source>
</reference>
<organism>
    <name type="scientific">Escherichia coli O157:H7</name>
    <dbReference type="NCBI Taxonomy" id="83334"/>
    <lineage>
        <taxon>Bacteria</taxon>
        <taxon>Pseudomonadati</taxon>
        <taxon>Pseudomonadota</taxon>
        <taxon>Gammaproteobacteria</taxon>
        <taxon>Enterobacterales</taxon>
        <taxon>Enterobacteriaceae</taxon>
        <taxon>Escherichia</taxon>
    </lineage>
</organism>
<comment type="function">
    <text evidence="1">The phosphoenolpyruvate-dependent sugar phosphotransferase system (sugar PTS), a major carbohydrate active transport system, catalyzes the phosphorylation of incoming sugar substrates concomitantly with their translocation across the cell membrane. The enzyme II CmtAB PTS system is involved in D-mannitol transport.</text>
</comment>
<comment type="subcellular location">
    <subcellularLocation>
        <location evidence="4">Cytoplasm</location>
    </subcellularLocation>
</comment>
<comment type="domain">
    <text evidence="3">The PTS EIIA type-2 domain is phosphorylated by phospho-HPr on a histidyl residue. Then, it transfers the phosphoryl group to the PTS EIIB type-2 domain.</text>
</comment>
<evidence type="ECO:0000250" key="1">
    <source>
        <dbReference type="UniProtKB" id="P0A0E0"/>
    </source>
</evidence>
<evidence type="ECO:0000250" key="2">
    <source>
        <dbReference type="UniProtKB" id="P69824"/>
    </source>
</evidence>
<evidence type="ECO:0000255" key="3">
    <source>
        <dbReference type="PROSITE-ProRule" id="PRU00417"/>
    </source>
</evidence>
<evidence type="ECO:0000305" key="4"/>
<gene>
    <name type="primary">cmtB</name>
    <name type="ordered locus">Z4278</name>
    <name type="ordered locus">ECs3809</name>
</gene>
<dbReference type="EMBL" id="AE005174">
    <property type="protein sequence ID" value="AAG58064.1"/>
    <property type="molecule type" value="Genomic_DNA"/>
</dbReference>
<dbReference type="EMBL" id="BA000007">
    <property type="protein sequence ID" value="BAB37232.1"/>
    <property type="molecule type" value="Genomic_DNA"/>
</dbReference>
<dbReference type="PIR" id="A98105">
    <property type="entry name" value="A98105"/>
</dbReference>
<dbReference type="PIR" id="D85950">
    <property type="entry name" value="D85950"/>
</dbReference>
<dbReference type="RefSeq" id="NP_311836.1">
    <property type="nucleotide sequence ID" value="NC_002695.1"/>
</dbReference>
<dbReference type="RefSeq" id="WP_001239650.1">
    <property type="nucleotide sequence ID" value="NZ_VOAI01000003.1"/>
</dbReference>
<dbReference type="BMRB" id="P69825"/>
<dbReference type="SMR" id="P69825"/>
<dbReference type="STRING" id="155864.Z4278"/>
<dbReference type="GeneID" id="75205230"/>
<dbReference type="GeneID" id="916372"/>
<dbReference type="KEGG" id="ece:Z4278"/>
<dbReference type="KEGG" id="ecs:ECs_3809"/>
<dbReference type="PATRIC" id="fig|386585.9.peg.3976"/>
<dbReference type="eggNOG" id="COG1762">
    <property type="taxonomic scope" value="Bacteria"/>
</dbReference>
<dbReference type="HOGENOM" id="CLU_072531_2_0_6"/>
<dbReference type="OMA" id="NDRAYQW"/>
<dbReference type="Proteomes" id="UP000000558">
    <property type="component" value="Chromosome"/>
</dbReference>
<dbReference type="Proteomes" id="UP000002519">
    <property type="component" value="Chromosome"/>
</dbReference>
<dbReference type="GO" id="GO:0005737">
    <property type="term" value="C:cytoplasm"/>
    <property type="evidence" value="ECO:0007669"/>
    <property type="project" value="UniProtKB-SubCell"/>
</dbReference>
<dbReference type="GO" id="GO:0016301">
    <property type="term" value="F:kinase activity"/>
    <property type="evidence" value="ECO:0007669"/>
    <property type="project" value="UniProtKB-KW"/>
</dbReference>
<dbReference type="GO" id="GO:0009401">
    <property type="term" value="P:phosphoenolpyruvate-dependent sugar phosphotransferase system"/>
    <property type="evidence" value="ECO:0007669"/>
    <property type="project" value="UniProtKB-KW"/>
</dbReference>
<dbReference type="CDD" id="cd00211">
    <property type="entry name" value="PTS_IIA_fru"/>
    <property type="match status" value="1"/>
</dbReference>
<dbReference type="FunFam" id="3.40.930.10:FF:000010">
    <property type="entry name" value="Mannitol-specific cryptic phosphotransferase enzyme IIA component"/>
    <property type="match status" value="1"/>
</dbReference>
<dbReference type="Gene3D" id="3.40.930.10">
    <property type="entry name" value="Mannitol-specific EII, Chain A"/>
    <property type="match status" value="1"/>
</dbReference>
<dbReference type="InterPro" id="IPR051351">
    <property type="entry name" value="Ascorbate-PTS_EIIA_comp"/>
</dbReference>
<dbReference type="InterPro" id="IPR016152">
    <property type="entry name" value="PTrfase/Anion_transptr"/>
</dbReference>
<dbReference type="InterPro" id="IPR002178">
    <property type="entry name" value="PTS_EIIA_type-2_dom"/>
</dbReference>
<dbReference type="NCBIfam" id="NF007358">
    <property type="entry name" value="PRK09854.1"/>
    <property type="match status" value="1"/>
</dbReference>
<dbReference type="PANTHER" id="PTHR36203">
    <property type="entry name" value="ASCORBATE-SPECIFIC PTS SYSTEM EIIA COMPONENT"/>
    <property type="match status" value="1"/>
</dbReference>
<dbReference type="PANTHER" id="PTHR36203:SF4">
    <property type="entry name" value="MANNITOL-SPECIFIC CRYPTIC PHOSPHOTRANSFERASE ENZYME IIA COMPONENT"/>
    <property type="match status" value="1"/>
</dbReference>
<dbReference type="Pfam" id="PF00359">
    <property type="entry name" value="PTS_EIIA_2"/>
    <property type="match status" value="1"/>
</dbReference>
<dbReference type="SUPFAM" id="SSF55804">
    <property type="entry name" value="Phoshotransferase/anion transport protein"/>
    <property type="match status" value="1"/>
</dbReference>
<dbReference type="PROSITE" id="PS51094">
    <property type="entry name" value="PTS_EIIA_TYPE_2"/>
    <property type="match status" value="1"/>
</dbReference>
<dbReference type="PROSITE" id="PS00372">
    <property type="entry name" value="PTS_EIIA_TYPE_2_HIS"/>
    <property type="match status" value="1"/>
</dbReference>
<keyword id="KW-0963">Cytoplasm</keyword>
<keyword id="KW-0418">Kinase</keyword>
<keyword id="KW-0597">Phosphoprotein</keyword>
<keyword id="KW-0598">Phosphotransferase system</keyword>
<keyword id="KW-1185">Reference proteome</keyword>
<keyword id="KW-0762">Sugar transport</keyword>
<keyword id="KW-0808">Transferase</keyword>
<keyword id="KW-0813">Transport</keyword>
<protein>
    <recommendedName>
        <fullName evidence="2">Mannitol-specific cryptic phosphotransferase enzyme IIA component</fullName>
    </recommendedName>
    <alternativeName>
        <fullName evidence="1">EIIA</fullName>
    </alternativeName>
    <alternativeName>
        <fullName evidence="1">EIII</fullName>
    </alternativeName>
    <alternativeName>
        <fullName evidence="1">PTS system mannitol-specific EIIA component</fullName>
    </alternativeName>
</protein>
<accession>P69825</accession>
<accession>P32058</accession>
<feature type="chain" id="PRO_0000186682" description="Mannitol-specific cryptic phosphotransferase enzyme IIA component">
    <location>
        <begin position="1"/>
        <end position="147"/>
    </location>
</feature>
<feature type="domain" description="PTS EIIA type-2" evidence="3">
    <location>
        <begin position="5"/>
        <end position="147"/>
    </location>
</feature>
<feature type="active site" description="Tele-phosphohistidine intermediate" evidence="1 2 3">
    <location>
        <position position="67"/>
    </location>
</feature>
<feature type="modified residue" description="Phosphohistidine; by HPr" evidence="1 2">
    <location>
        <position position="67"/>
    </location>
</feature>
<sequence length="147" mass="16046">MRLSDYFPESSISVIHSAKDWQEAIDFSMVSLLDKNYISENYIQAIKDSTINNGPYYILAPGVAMPHARPECGALKTGMSLTLLEQGVYFPGNDEPIKLLIGLSAADADSHIGAIQALSELLCEEEILEQLLTASSEKQLADIISRG</sequence>
<proteinExistence type="inferred from homology"/>
<name>PTMA_ECO57</name>